<keyword id="KW-0687">Ribonucleoprotein</keyword>
<keyword id="KW-0689">Ribosomal protein</keyword>
<keyword id="KW-0694">RNA-binding</keyword>
<keyword id="KW-0699">rRNA-binding</keyword>
<organism>
    <name type="scientific">Yersinia pestis bv. Antiqua (strain Nepal516)</name>
    <dbReference type="NCBI Taxonomy" id="377628"/>
    <lineage>
        <taxon>Bacteria</taxon>
        <taxon>Pseudomonadati</taxon>
        <taxon>Pseudomonadota</taxon>
        <taxon>Gammaproteobacteria</taxon>
        <taxon>Enterobacterales</taxon>
        <taxon>Yersiniaceae</taxon>
        <taxon>Yersinia</taxon>
    </lineage>
</organism>
<reference key="1">
    <citation type="journal article" date="2006" name="J. Bacteriol.">
        <title>Complete genome sequence of Yersinia pestis strains Antiqua and Nepal516: evidence of gene reduction in an emerging pathogen.</title>
        <authorList>
            <person name="Chain P.S.G."/>
            <person name="Hu P."/>
            <person name="Malfatti S.A."/>
            <person name="Radnedge L."/>
            <person name="Larimer F."/>
            <person name="Vergez L.M."/>
            <person name="Worsham P."/>
            <person name="Chu M.C."/>
            <person name="Andersen G.L."/>
        </authorList>
    </citation>
    <scope>NUCLEOTIDE SEQUENCE [LARGE SCALE GENOMIC DNA]</scope>
    <source>
        <strain>Nepal516</strain>
    </source>
</reference>
<reference key="2">
    <citation type="submission" date="2009-04" db="EMBL/GenBank/DDBJ databases">
        <title>Yersinia pestis Nepal516A whole genome shotgun sequencing project.</title>
        <authorList>
            <person name="Plunkett G. III"/>
            <person name="Anderson B.D."/>
            <person name="Baumler D.J."/>
            <person name="Burland V."/>
            <person name="Cabot E.L."/>
            <person name="Glasner J.D."/>
            <person name="Mau B."/>
            <person name="Neeno-Eckwall E."/>
            <person name="Perna N.T."/>
            <person name="Munk A.C."/>
            <person name="Tapia R."/>
            <person name="Green L.D."/>
            <person name="Rogers Y.C."/>
            <person name="Detter J.C."/>
            <person name="Bruce D.C."/>
            <person name="Brettin T.S."/>
        </authorList>
    </citation>
    <scope>NUCLEOTIDE SEQUENCE [LARGE SCALE GENOMIC DNA]</scope>
    <source>
        <strain>Nepal516</strain>
    </source>
</reference>
<feature type="chain" id="PRO_1000003663" description="Small ribosomal subunit protein bS18">
    <location>
        <begin position="1"/>
        <end position="75"/>
    </location>
</feature>
<comment type="function">
    <text evidence="1">Binds as a heterodimer with protein bS6 to the central domain of the 16S rRNA, where it helps stabilize the platform of the 30S subunit.</text>
</comment>
<comment type="subunit">
    <text evidence="1">Part of the 30S ribosomal subunit. Forms a tight heterodimer with protein bS6.</text>
</comment>
<comment type="similarity">
    <text evidence="1">Belongs to the bacterial ribosomal protein bS18 family.</text>
</comment>
<name>RS18_YERPN</name>
<evidence type="ECO:0000255" key="1">
    <source>
        <dbReference type="HAMAP-Rule" id="MF_00270"/>
    </source>
</evidence>
<evidence type="ECO:0000305" key="2"/>
<dbReference type="EMBL" id="CP000305">
    <property type="protein sequence ID" value="ABG19608.1"/>
    <property type="molecule type" value="Genomic_DNA"/>
</dbReference>
<dbReference type="EMBL" id="ACNQ01000017">
    <property type="protein sequence ID" value="EEO75790.1"/>
    <property type="molecule type" value="Genomic_DNA"/>
</dbReference>
<dbReference type="RefSeq" id="WP_002210155.1">
    <property type="nucleotide sequence ID" value="NZ_ACNQ01000017.1"/>
</dbReference>
<dbReference type="SMR" id="Q1CEH2"/>
<dbReference type="GeneID" id="98391335"/>
<dbReference type="KEGG" id="ypn:YPN_3281"/>
<dbReference type="HOGENOM" id="CLU_148710_2_2_6"/>
<dbReference type="Proteomes" id="UP000008936">
    <property type="component" value="Chromosome"/>
</dbReference>
<dbReference type="GO" id="GO:0022627">
    <property type="term" value="C:cytosolic small ribosomal subunit"/>
    <property type="evidence" value="ECO:0007669"/>
    <property type="project" value="TreeGrafter"/>
</dbReference>
<dbReference type="GO" id="GO:0070181">
    <property type="term" value="F:small ribosomal subunit rRNA binding"/>
    <property type="evidence" value="ECO:0007669"/>
    <property type="project" value="TreeGrafter"/>
</dbReference>
<dbReference type="GO" id="GO:0003735">
    <property type="term" value="F:structural constituent of ribosome"/>
    <property type="evidence" value="ECO:0007669"/>
    <property type="project" value="InterPro"/>
</dbReference>
<dbReference type="GO" id="GO:0006412">
    <property type="term" value="P:translation"/>
    <property type="evidence" value="ECO:0007669"/>
    <property type="project" value="UniProtKB-UniRule"/>
</dbReference>
<dbReference type="FunFam" id="4.10.640.10:FF:000001">
    <property type="entry name" value="30S ribosomal protein S18"/>
    <property type="match status" value="1"/>
</dbReference>
<dbReference type="Gene3D" id="4.10.640.10">
    <property type="entry name" value="Ribosomal protein S18"/>
    <property type="match status" value="1"/>
</dbReference>
<dbReference type="HAMAP" id="MF_00270">
    <property type="entry name" value="Ribosomal_bS18"/>
    <property type="match status" value="1"/>
</dbReference>
<dbReference type="InterPro" id="IPR001648">
    <property type="entry name" value="Ribosomal_bS18"/>
</dbReference>
<dbReference type="InterPro" id="IPR018275">
    <property type="entry name" value="Ribosomal_bS18_CS"/>
</dbReference>
<dbReference type="InterPro" id="IPR036870">
    <property type="entry name" value="Ribosomal_bS18_sf"/>
</dbReference>
<dbReference type="NCBIfam" id="TIGR00165">
    <property type="entry name" value="S18"/>
    <property type="match status" value="1"/>
</dbReference>
<dbReference type="PANTHER" id="PTHR13479">
    <property type="entry name" value="30S RIBOSOMAL PROTEIN S18"/>
    <property type="match status" value="1"/>
</dbReference>
<dbReference type="PANTHER" id="PTHR13479:SF40">
    <property type="entry name" value="SMALL RIBOSOMAL SUBUNIT PROTEIN BS18M"/>
    <property type="match status" value="1"/>
</dbReference>
<dbReference type="Pfam" id="PF01084">
    <property type="entry name" value="Ribosomal_S18"/>
    <property type="match status" value="1"/>
</dbReference>
<dbReference type="PRINTS" id="PR00974">
    <property type="entry name" value="RIBOSOMALS18"/>
</dbReference>
<dbReference type="SUPFAM" id="SSF46911">
    <property type="entry name" value="Ribosomal protein S18"/>
    <property type="match status" value="1"/>
</dbReference>
<dbReference type="PROSITE" id="PS00057">
    <property type="entry name" value="RIBOSOMAL_S18"/>
    <property type="match status" value="1"/>
</dbReference>
<gene>
    <name evidence="1" type="primary">rpsR</name>
    <name type="ordered locus">YPN_3281</name>
    <name type="ORF">YP516_3726</name>
</gene>
<protein>
    <recommendedName>
        <fullName evidence="1">Small ribosomal subunit protein bS18</fullName>
    </recommendedName>
    <alternativeName>
        <fullName evidence="2">30S ribosomal protein S18</fullName>
    </alternativeName>
</protein>
<sequence length="75" mass="8989">MARYFRRRKFCRFTAEGVVEIDYKDIATLKNYITESGKIVPSRITGTRAKYQRQLARCIKRARYLSLLPYTDRHQ</sequence>
<accession>Q1CEH2</accession>
<accession>C4GXZ0</accession>
<proteinExistence type="inferred from homology"/>